<sequence length="604" mass="65139">MSHPSWLPPKSTNEPVGHVTARMETTHAFGTPSISVSTQQTPKKFAPVVAPKPKYNPYKQPGGDGDFLPPPPPPVDDLGNITSQGAFPPPPPLDDVAFNVQVNPGGKTLEERRSSLDAEIDSLTSILADLESSSPYKPRIQQGSGTSSSAATTPSVSTPVTGHKRMIIPNQPPLTATKKSTAKGPGQPAPIPVTPIGTLKPQPVPASYTTASTPSRPTFNVQVRTAQPSPHYQPPGPQPTHYGSLGPGQPYAAPPARPPGAQQYGSPQPRGPDYGYAPPPARPSEPSYGYAPQQGRYQDPYYGGYGGRNGSEAPYMPQSTWKVEPAYPSSNTVGQAPPGMYQHPGPKKTYITDPVLAPQPLQQKSGYPSSGPTSSTPAFRPEDELEHLTKKMLYDMENPPSDDYFGRCARCGENVVGEGTGCTAMDQVFHVECFTCMMCNNKLRGQPFYAVEKKAYCEPCYINTLEQCSVCAKPIMERILRATGKAYHPHCFTCVMCHRSLDGIPFTVDAGGNIHCIEDFHKKFAPRCSVCKEPIMPAPGQEETVRIVALDRDFHVQCYRCEDCGGLLSEGDNQGCYPLDGHILCKTCNSARIQALTAKASTDL</sequence>
<gene>
    <name type="primary">LPP</name>
    <name type="ORF">RCJMB04_2l20</name>
</gene>
<accession>Q5F464</accession>
<keyword id="KW-0010">Activator</keyword>
<keyword id="KW-0130">Cell adhesion</keyword>
<keyword id="KW-0965">Cell junction</keyword>
<keyword id="KW-0963">Cytoplasm</keyword>
<keyword id="KW-0440">LIM domain</keyword>
<keyword id="KW-0479">Metal-binding</keyword>
<keyword id="KW-0539">Nucleus</keyword>
<keyword id="KW-1185">Reference proteome</keyword>
<keyword id="KW-0677">Repeat</keyword>
<keyword id="KW-0862">Zinc</keyword>
<organism>
    <name type="scientific">Gallus gallus</name>
    <name type="common">Chicken</name>
    <dbReference type="NCBI Taxonomy" id="9031"/>
    <lineage>
        <taxon>Eukaryota</taxon>
        <taxon>Metazoa</taxon>
        <taxon>Chordata</taxon>
        <taxon>Craniata</taxon>
        <taxon>Vertebrata</taxon>
        <taxon>Euteleostomi</taxon>
        <taxon>Archelosauria</taxon>
        <taxon>Archosauria</taxon>
        <taxon>Dinosauria</taxon>
        <taxon>Saurischia</taxon>
        <taxon>Theropoda</taxon>
        <taxon>Coelurosauria</taxon>
        <taxon>Aves</taxon>
        <taxon>Neognathae</taxon>
        <taxon>Galloanserae</taxon>
        <taxon>Galliformes</taxon>
        <taxon>Phasianidae</taxon>
        <taxon>Phasianinae</taxon>
        <taxon>Gallus</taxon>
    </lineage>
</organism>
<protein>
    <recommendedName>
        <fullName>Lipoma-preferred partner homolog</fullName>
    </recommendedName>
</protein>
<proteinExistence type="evidence at transcript level"/>
<evidence type="ECO:0000250" key="1"/>
<evidence type="ECO:0000255" key="2">
    <source>
        <dbReference type="PROSITE-ProRule" id="PRU00125"/>
    </source>
</evidence>
<evidence type="ECO:0000256" key="3">
    <source>
        <dbReference type="SAM" id="MobiDB-lite"/>
    </source>
</evidence>
<evidence type="ECO:0000305" key="4"/>
<dbReference type="EMBL" id="AJ851436">
    <property type="protein sequence ID" value="CAH65070.1"/>
    <property type="molecule type" value="mRNA"/>
</dbReference>
<dbReference type="RefSeq" id="NP_001026738.1">
    <property type="nucleotide sequence ID" value="NM_001031567.2"/>
</dbReference>
<dbReference type="RefSeq" id="NP_001383159.1">
    <property type="nucleotide sequence ID" value="NM_001396230.1"/>
</dbReference>
<dbReference type="RefSeq" id="XP_015146918.1">
    <property type="nucleotide sequence ID" value="XM_015291432.4"/>
</dbReference>
<dbReference type="RefSeq" id="XP_015146919.1">
    <property type="nucleotide sequence ID" value="XM_015291433.4"/>
</dbReference>
<dbReference type="RefSeq" id="XP_015146921.1">
    <property type="nucleotide sequence ID" value="XM_015291435.1"/>
</dbReference>
<dbReference type="RefSeq" id="XP_015146922.1">
    <property type="nucleotide sequence ID" value="XM_015291436.1"/>
</dbReference>
<dbReference type="RefSeq" id="XP_015146923.1">
    <property type="nucleotide sequence ID" value="XM_015291437.4"/>
</dbReference>
<dbReference type="RefSeq" id="XP_015146924.1">
    <property type="nucleotide sequence ID" value="XM_015291438.1"/>
</dbReference>
<dbReference type="RefSeq" id="XP_015146925.1">
    <property type="nucleotide sequence ID" value="XM_015291439.1"/>
</dbReference>
<dbReference type="RefSeq" id="XP_015146926.1">
    <property type="nucleotide sequence ID" value="XM_015291440.1"/>
</dbReference>
<dbReference type="RefSeq" id="XP_040561551.1">
    <property type="nucleotide sequence ID" value="XM_040705617.2"/>
</dbReference>
<dbReference type="RefSeq" id="XP_046754430.1">
    <property type="nucleotide sequence ID" value="XM_046898474.1"/>
</dbReference>
<dbReference type="RefSeq" id="XP_046754431.1">
    <property type="nucleotide sequence ID" value="XM_046898475.1"/>
</dbReference>
<dbReference type="RefSeq" id="XP_046754432.1">
    <property type="nucleotide sequence ID" value="XM_046898476.1"/>
</dbReference>
<dbReference type="RefSeq" id="XP_046754433.1">
    <property type="nucleotide sequence ID" value="XM_046898477.1"/>
</dbReference>
<dbReference type="RefSeq" id="XP_046779948.1">
    <property type="nucleotide sequence ID" value="XM_046923992.1"/>
</dbReference>
<dbReference type="RefSeq" id="XP_046779949.1">
    <property type="nucleotide sequence ID" value="XM_046923993.1"/>
</dbReference>
<dbReference type="RefSeq" id="XP_046779950.1">
    <property type="nucleotide sequence ID" value="XM_046923994.1"/>
</dbReference>
<dbReference type="RefSeq" id="XP_046779951.1">
    <property type="nucleotide sequence ID" value="XM_046923995.1"/>
</dbReference>
<dbReference type="RefSeq" id="XP_046779952.1">
    <property type="nucleotide sequence ID" value="XM_046923996.1"/>
</dbReference>
<dbReference type="RefSeq" id="XP_046779953.1">
    <property type="nucleotide sequence ID" value="XM_046923997.1"/>
</dbReference>
<dbReference type="RefSeq" id="XP_046779954.1">
    <property type="nucleotide sequence ID" value="XM_046923998.1"/>
</dbReference>
<dbReference type="RefSeq" id="XP_046779955.1">
    <property type="nucleotide sequence ID" value="XM_046923999.1"/>
</dbReference>
<dbReference type="SMR" id="Q5F464"/>
<dbReference type="FunCoup" id="Q5F464">
    <property type="interactions" value="716"/>
</dbReference>
<dbReference type="STRING" id="9031.ENSGALP00000073892"/>
<dbReference type="GlyGen" id="Q5F464">
    <property type="glycosylation" value="2 sites"/>
</dbReference>
<dbReference type="PaxDb" id="9031-ENSGALP00000011857"/>
<dbReference type="GeneID" id="429148"/>
<dbReference type="KEGG" id="gga:429148"/>
<dbReference type="CTD" id="4026"/>
<dbReference type="VEuPathDB" id="HostDB:geneid_429148"/>
<dbReference type="eggNOG" id="KOG1701">
    <property type="taxonomic scope" value="Eukaryota"/>
</dbReference>
<dbReference type="HOGENOM" id="CLU_001357_10_0_1"/>
<dbReference type="InParanoid" id="Q5F464"/>
<dbReference type="OMA" id="GGMDYTY"/>
<dbReference type="OrthoDB" id="25414at2759"/>
<dbReference type="PhylomeDB" id="Q5F464"/>
<dbReference type="TreeFam" id="TF320310"/>
<dbReference type="PRO" id="PR:Q5F464"/>
<dbReference type="Proteomes" id="UP000000539">
    <property type="component" value="Chromosome 9"/>
</dbReference>
<dbReference type="Bgee" id="ENSGALG00000007337">
    <property type="expression patterns" value="Expressed in skeletal muscle tissue and 9 other cell types or tissues"/>
</dbReference>
<dbReference type="GO" id="GO:0005737">
    <property type="term" value="C:cytoplasm"/>
    <property type="evidence" value="ECO:0007669"/>
    <property type="project" value="UniProtKB-SubCell"/>
</dbReference>
<dbReference type="GO" id="GO:0005925">
    <property type="term" value="C:focal adhesion"/>
    <property type="evidence" value="ECO:0000318"/>
    <property type="project" value="GO_Central"/>
</dbReference>
<dbReference type="GO" id="GO:0005634">
    <property type="term" value="C:nucleus"/>
    <property type="evidence" value="ECO:0007669"/>
    <property type="project" value="UniProtKB-SubCell"/>
</dbReference>
<dbReference type="GO" id="GO:0001725">
    <property type="term" value="C:stress fiber"/>
    <property type="evidence" value="ECO:0000318"/>
    <property type="project" value="GO_Central"/>
</dbReference>
<dbReference type="GO" id="GO:0046872">
    <property type="term" value="F:metal ion binding"/>
    <property type="evidence" value="ECO:0007669"/>
    <property type="project" value="UniProtKB-KW"/>
</dbReference>
<dbReference type="GO" id="GO:0098609">
    <property type="term" value="P:cell-cell adhesion"/>
    <property type="evidence" value="ECO:0000318"/>
    <property type="project" value="GO_Central"/>
</dbReference>
<dbReference type="CDD" id="cd09350">
    <property type="entry name" value="LIM1_TRIP6"/>
    <property type="match status" value="1"/>
</dbReference>
<dbReference type="CDD" id="cd09356">
    <property type="entry name" value="LIM2_TRIP6"/>
    <property type="match status" value="1"/>
</dbReference>
<dbReference type="CDD" id="cd09436">
    <property type="entry name" value="LIM3_TRIP6"/>
    <property type="match status" value="1"/>
</dbReference>
<dbReference type="FunFam" id="2.10.110.10:FF:000027">
    <property type="entry name" value="lipoma-preferred partner isoform X1"/>
    <property type="match status" value="1"/>
</dbReference>
<dbReference type="FunFam" id="2.10.110.10:FF:000042">
    <property type="entry name" value="lipoma-preferred partner isoform X1"/>
    <property type="match status" value="1"/>
</dbReference>
<dbReference type="FunFam" id="2.10.110.10:FF:000047">
    <property type="entry name" value="lipoma-preferred partner isoform X1"/>
    <property type="match status" value="1"/>
</dbReference>
<dbReference type="Gene3D" id="2.10.110.10">
    <property type="entry name" value="Cysteine Rich Protein"/>
    <property type="match status" value="3"/>
</dbReference>
<dbReference type="InterPro" id="IPR001781">
    <property type="entry name" value="Znf_LIM"/>
</dbReference>
<dbReference type="PANTHER" id="PTHR24207:SF0">
    <property type="entry name" value="LIPOMA-PREFERRED PARTNER"/>
    <property type="match status" value="1"/>
</dbReference>
<dbReference type="PANTHER" id="PTHR24207">
    <property type="entry name" value="ZYX102 PROTEIN"/>
    <property type="match status" value="1"/>
</dbReference>
<dbReference type="Pfam" id="PF00412">
    <property type="entry name" value="LIM"/>
    <property type="match status" value="3"/>
</dbReference>
<dbReference type="SMART" id="SM00132">
    <property type="entry name" value="LIM"/>
    <property type="match status" value="3"/>
</dbReference>
<dbReference type="SUPFAM" id="SSF57716">
    <property type="entry name" value="Glucocorticoid receptor-like (DNA-binding domain)"/>
    <property type="match status" value="3"/>
</dbReference>
<dbReference type="PROSITE" id="PS00478">
    <property type="entry name" value="LIM_DOMAIN_1"/>
    <property type="match status" value="2"/>
</dbReference>
<dbReference type="PROSITE" id="PS50023">
    <property type="entry name" value="LIM_DOMAIN_2"/>
    <property type="match status" value="3"/>
</dbReference>
<name>LPP_CHICK</name>
<feature type="chain" id="PRO_0000075835" description="Lipoma-preferred partner homolog">
    <location>
        <begin position="1"/>
        <end position="604"/>
    </location>
</feature>
<feature type="domain" description="LIM zinc-binding 1" evidence="2">
    <location>
        <begin position="406"/>
        <end position="465"/>
    </location>
</feature>
<feature type="domain" description="LIM zinc-binding 2" evidence="2">
    <location>
        <begin position="466"/>
        <end position="526"/>
    </location>
</feature>
<feature type="domain" description="LIM zinc-binding 3" evidence="2">
    <location>
        <begin position="527"/>
        <end position="595"/>
    </location>
</feature>
<feature type="region of interest" description="Disordered" evidence="3">
    <location>
        <begin position="31"/>
        <end position="96"/>
    </location>
</feature>
<feature type="region of interest" description="Disordered" evidence="3">
    <location>
        <begin position="129"/>
        <end position="381"/>
    </location>
</feature>
<feature type="compositionally biased region" description="Polar residues" evidence="3">
    <location>
        <begin position="32"/>
        <end position="41"/>
    </location>
</feature>
<feature type="compositionally biased region" description="Low complexity" evidence="3">
    <location>
        <begin position="42"/>
        <end position="53"/>
    </location>
</feature>
<feature type="compositionally biased region" description="Low complexity" evidence="3">
    <location>
        <begin position="143"/>
        <end position="161"/>
    </location>
</feature>
<feature type="compositionally biased region" description="Polar residues" evidence="3">
    <location>
        <begin position="207"/>
        <end position="226"/>
    </location>
</feature>
<feature type="compositionally biased region" description="Low complexity" evidence="3">
    <location>
        <begin position="365"/>
        <end position="377"/>
    </location>
</feature>
<reference key="1">
    <citation type="journal article" date="2005" name="Genome Biol.">
        <title>Full-length cDNAs from chicken bursal lymphocytes to facilitate gene function analysis.</title>
        <authorList>
            <person name="Caldwell R.B."/>
            <person name="Kierzek A.M."/>
            <person name="Arakawa H."/>
            <person name="Bezzubov Y."/>
            <person name="Zaim J."/>
            <person name="Fiedler P."/>
            <person name="Kutter S."/>
            <person name="Blagodatski A."/>
            <person name="Kostovska D."/>
            <person name="Koter M."/>
            <person name="Plachy J."/>
            <person name="Carninci P."/>
            <person name="Hayashizaki Y."/>
            <person name="Buerstedde J.-M."/>
        </authorList>
    </citation>
    <scope>NUCLEOTIDE SEQUENCE [LARGE SCALE MRNA]</scope>
    <source>
        <strain>CB</strain>
        <tissue>Bursa of Fabricius</tissue>
    </source>
</reference>
<comment type="function">
    <text evidence="1">May play a structural role at sites of cell adhesion in maintaining cell shape and motility. May be involved in signal transduction from cell adhesion sites to the nucleus (By similarity).</text>
</comment>
<comment type="subcellular location">
    <subcellularLocation>
        <location evidence="1">Nucleus</location>
    </subcellularLocation>
    <subcellularLocation>
        <location evidence="1">Cytoplasm</location>
    </subcellularLocation>
    <subcellularLocation>
        <location evidence="1">Cell junction</location>
    </subcellularLocation>
    <text evidence="1">Found in the nucleus, in the cytoplasm and at cell adhesion sites.</text>
</comment>
<comment type="similarity">
    <text evidence="4">Belongs to the zyxin/ajuba family.</text>
</comment>